<proteinExistence type="inferred from homology"/>
<organism>
    <name type="scientific">Pseudomonas entomophila (strain L48)</name>
    <dbReference type="NCBI Taxonomy" id="384676"/>
    <lineage>
        <taxon>Bacteria</taxon>
        <taxon>Pseudomonadati</taxon>
        <taxon>Pseudomonadota</taxon>
        <taxon>Gammaproteobacteria</taxon>
        <taxon>Pseudomonadales</taxon>
        <taxon>Pseudomonadaceae</taxon>
        <taxon>Pseudomonas</taxon>
    </lineage>
</organism>
<name>EFP_PSEE4</name>
<feature type="chain" id="PRO_1000010813" description="Elongation factor P">
    <location>
        <begin position="1"/>
        <end position="189"/>
    </location>
</feature>
<sequence>MKTGKELKPGTVLRIDNDPWLVQKAEFTKSGRNSAIMKTKLKNLLTGYKTETVYGADDKLDDVILDRKEATLSFISGDSYTFMDTTDYTMYELNAEDIDAVLPYIEEGMEDICEAVFFEGRLVSVELPTTISRQVTYTENAARGDTSGKVMKPAKLKNGTEIQVADFIQIDEWIDIDTRDNSFKGRSKK</sequence>
<keyword id="KW-0963">Cytoplasm</keyword>
<keyword id="KW-0251">Elongation factor</keyword>
<keyword id="KW-0648">Protein biosynthesis</keyword>
<accession>Q1ID35</accession>
<dbReference type="EMBL" id="CT573326">
    <property type="protein sequence ID" value="CAK14424.1"/>
    <property type="molecule type" value="Genomic_DNA"/>
</dbReference>
<dbReference type="RefSeq" id="WP_011532839.1">
    <property type="nucleotide sequence ID" value="NC_008027.1"/>
</dbReference>
<dbReference type="SMR" id="Q1ID35"/>
<dbReference type="STRING" id="384676.PSEEN1562"/>
<dbReference type="GeneID" id="93676803"/>
<dbReference type="KEGG" id="pen:PSEEN1562"/>
<dbReference type="eggNOG" id="COG0231">
    <property type="taxonomic scope" value="Bacteria"/>
</dbReference>
<dbReference type="HOGENOM" id="CLU_074944_2_1_6"/>
<dbReference type="OrthoDB" id="9801844at2"/>
<dbReference type="UniPathway" id="UPA00345"/>
<dbReference type="Proteomes" id="UP000000658">
    <property type="component" value="Chromosome"/>
</dbReference>
<dbReference type="GO" id="GO:0005737">
    <property type="term" value="C:cytoplasm"/>
    <property type="evidence" value="ECO:0007669"/>
    <property type="project" value="UniProtKB-SubCell"/>
</dbReference>
<dbReference type="GO" id="GO:0003746">
    <property type="term" value="F:translation elongation factor activity"/>
    <property type="evidence" value="ECO:0007669"/>
    <property type="project" value="UniProtKB-UniRule"/>
</dbReference>
<dbReference type="GO" id="GO:0043043">
    <property type="term" value="P:peptide biosynthetic process"/>
    <property type="evidence" value="ECO:0007669"/>
    <property type="project" value="InterPro"/>
</dbReference>
<dbReference type="CDD" id="cd04470">
    <property type="entry name" value="S1_EF-P_repeat_1"/>
    <property type="match status" value="1"/>
</dbReference>
<dbReference type="CDD" id="cd05794">
    <property type="entry name" value="S1_EF-P_repeat_2"/>
    <property type="match status" value="1"/>
</dbReference>
<dbReference type="FunFam" id="2.30.30.30:FF:000003">
    <property type="entry name" value="Elongation factor P"/>
    <property type="match status" value="1"/>
</dbReference>
<dbReference type="FunFam" id="2.40.50.140:FF:000004">
    <property type="entry name" value="Elongation factor P"/>
    <property type="match status" value="1"/>
</dbReference>
<dbReference type="Gene3D" id="2.30.30.30">
    <property type="match status" value="1"/>
</dbReference>
<dbReference type="Gene3D" id="2.40.50.140">
    <property type="entry name" value="Nucleic acid-binding proteins"/>
    <property type="match status" value="2"/>
</dbReference>
<dbReference type="HAMAP" id="MF_00141">
    <property type="entry name" value="EF_P"/>
    <property type="match status" value="1"/>
</dbReference>
<dbReference type="InterPro" id="IPR015365">
    <property type="entry name" value="Elong-fact-P_C"/>
</dbReference>
<dbReference type="InterPro" id="IPR012340">
    <property type="entry name" value="NA-bd_OB-fold"/>
</dbReference>
<dbReference type="InterPro" id="IPR014722">
    <property type="entry name" value="Rib_uL2_dom2"/>
</dbReference>
<dbReference type="InterPro" id="IPR020599">
    <property type="entry name" value="Transl_elong_fac_P/YeiP"/>
</dbReference>
<dbReference type="InterPro" id="IPR013185">
    <property type="entry name" value="Transl_elong_KOW-like"/>
</dbReference>
<dbReference type="InterPro" id="IPR001059">
    <property type="entry name" value="Transl_elong_P/YeiP_cen"/>
</dbReference>
<dbReference type="InterPro" id="IPR011768">
    <property type="entry name" value="Transl_elongation_fac_P"/>
</dbReference>
<dbReference type="InterPro" id="IPR008991">
    <property type="entry name" value="Translation_prot_SH3-like_sf"/>
</dbReference>
<dbReference type="NCBIfam" id="TIGR00038">
    <property type="entry name" value="efp"/>
    <property type="match status" value="1"/>
</dbReference>
<dbReference type="NCBIfam" id="NF001810">
    <property type="entry name" value="PRK00529.1"/>
    <property type="match status" value="1"/>
</dbReference>
<dbReference type="PANTHER" id="PTHR30053">
    <property type="entry name" value="ELONGATION FACTOR P"/>
    <property type="match status" value="1"/>
</dbReference>
<dbReference type="PANTHER" id="PTHR30053:SF12">
    <property type="entry name" value="ELONGATION FACTOR P (EF-P) FAMILY PROTEIN"/>
    <property type="match status" value="1"/>
</dbReference>
<dbReference type="Pfam" id="PF01132">
    <property type="entry name" value="EFP"/>
    <property type="match status" value="1"/>
</dbReference>
<dbReference type="Pfam" id="PF08207">
    <property type="entry name" value="EFP_N"/>
    <property type="match status" value="1"/>
</dbReference>
<dbReference type="Pfam" id="PF09285">
    <property type="entry name" value="Elong-fact-P_C"/>
    <property type="match status" value="1"/>
</dbReference>
<dbReference type="PIRSF" id="PIRSF005901">
    <property type="entry name" value="EF-P"/>
    <property type="match status" value="1"/>
</dbReference>
<dbReference type="SMART" id="SM01185">
    <property type="entry name" value="EFP"/>
    <property type="match status" value="1"/>
</dbReference>
<dbReference type="SMART" id="SM00841">
    <property type="entry name" value="Elong-fact-P_C"/>
    <property type="match status" value="1"/>
</dbReference>
<dbReference type="SUPFAM" id="SSF50249">
    <property type="entry name" value="Nucleic acid-binding proteins"/>
    <property type="match status" value="2"/>
</dbReference>
<dbReference type="SUPFAM" id="SSF50104">
    <property type="entry name" value="Translation proteins SH3-like domain"/>
    <property type="match status" value="1"/>
</dbReference>
<comment type="function">
    <text evidence="1">Involved in peptide bond synthesis. Stimulates efficient translation and peptide-bond synthesis on native or reconstituted 70S ribosomes in vitro. Probably functions indirectly by altering the affinity of the ribosome for aminoacyl-tRNA, thus increasing their reactivity as acceptors for peptidyl transferase.</text>
</comment>
<comment type="pathway">
    <text evidence="1">Protein biosynthesis; polypeptide chain elongation.</text>
</comment>
<comment type="subcellular location">
    <subcellularLocation>
        <location evidence="1">Cytoplasm</location>
    </subcellularLocation>
</comment>
<comment type="similarity">
    <text evidence="1">Belongs to the elongation factor P family.</text>
</comment>
<protein>
    <recommendedName>
        <fullName evidence="1">Elongation factor P</fullName>
        <shortName evidence="1">EF-P</shortName>
    </recommendedName>
</protein>
<evidence type="ECO:0000255" key="1">
    <source>
        <dbReference type="HAMAP-Rule" id="MF_00141"/>
    </source>
</evidence>
<gene>
    <name evidence="1" type="primary">efp</name>
    <name type="ordered locus">PSEEN1562</name>
</gene>
<reference key="1">
    <citation type="journal article" date="2006" name="Nat. Biotechnol.">
        <title>Complete genome sequence of the entomopathogenic and metabolically versatile soil bacterium Pseudomonas entomophila.</title>
        <authorList>
            <person name="Vodovar N."/>
            <person name="Vallenet D."/>
            <person name="Cruveiller S."/>
            <person name="Rouy Z."/>
            <person name="Barbe V."/>
            <person name="Acosta C."/>
            <person name="Cattolico L."/>
            <person name="Jubin C."/>
            <person name="Lajus A."/>
            <person name="Segurens B."/>
            <person name="Vacherie B."/>
            <person name="Wincker P."/>
            <person name="Weissenbach J."/>
            <person name="Lemaitre B."/>
            <person name="Medigue C."/>
            <person name="Boccard F."/>
        </authorList>
    </citation>
    <scope>NUCLEOTIDE SEQUENCE [LARGE SCALE GENOMIC DNA]</scope>
    <source>
        <strain>L48</strain>
    </source>
</reference>